<reference key="1">
    <citation type="journal article" date="2004" name="Proc. Natl. Acad. Sci. U.S.A.">
        <title>Identification of viral genomic elements responsible for rabies virus neuroinvasiveness.</title>
        <authorList>
            <person name="Faber M."/>
            <person name="Pulmanausahakul R."/>
            <person name="Nagao K."/>
            <person name="Prosniak M."/>
            <person name="Rice A.B."/>
            <person name="Koprowski H."/>
            <person name="Schnell M.J."/>
            <person name="Dietzschold B."/>
        </authorList>
    </citation>
    <scope>NUCLEOTIDE SEQUENCE [GENOMIC RNA]</scope>
</reference>
<gene>
    <name type="primary">P</name>
</gene>
<evidence type="ECO:0000250" key="1"/>
<evidence type="ECO:0000250" key="2">
    <source>
        <dbReference type="UniProtKB" id="P16286"/>
    </source>
</evidence>
<evidence type="ECO:0000256" key="3">
    <source>
        <dbReference type="SAM" id="MobiDB-lite"/>
    </source>
</evidence>
<evidence type="ECO:0000305" key="4"/>
<proteinExistence type="inferred from homology"/>
<comment type="function">
    <text evidence="1 2">Non catalytic polymerase cofactor and regulatory protein that plays a role in viral transcription and replication. Stabilizes the RNA polymerase L to the N-RNA template and binds the soluble protein N, preventing it from encapsidating non-genomic RNA. Also inhibits host IFN-alpha and IFN-beta signaling by binding and retaining phosphorylated STAT1 in the cytoplasm or by inhibiting the DNA binding of STAT1 in the nucleus. Might be involved, through interaction with host dynein, in intracellular microtubule-dependent virus transport of incoming virus from the synapse toward the cell body (By similarity). Inhibits interferon induction pathways by interacting with host TBK1 and preventing the formation of dynamic cytoplasmic condensates that have liquid properties and that are essential for interferon production (By similarity).</text>
</comment>
<comment type="subunit">
    <molecule>Phosphoprotein</molecule>
    <text evidence="2">Homotrimer when phosphorylated. This trimer is stabilized by binding to the L protein. Binds soluble protein N, and ribonucleocapsid. Interacts with host DYNLL1 and DYNLL2; this interaction may play a role in intracellular microtubule-dependent virus transport of incoming virus. Interacts with host STAT1, STAT2 and PML. Interacts with host TBK1.</text>
</comment>
<comment type="subunit">
    <molecule>Isoform P3</molecule>
    <text evidence="1">Binds host PML.</text>
</comment>
<comment type="subcellular location">
    <molecule>Phosphoprotein</molecule>
    <subcellularLocation>
        <location>Virion</location>
    </subcellularLocation>
    <subcellularLocation>
        <location evidence="1">Host cytoplasm</location>
    </subcellularLocation>
</comment>
<comment type="subcellular location">
    <molecule>Isoform P2</molecule>
    <subcellularLocation>
        <location evidence="1">Host cytoplasm</location>
    </subcellularLocation>
</comment>
<comment type="subcellular location">
    <molecule>Isoform P3</molecule>
    <subcellularLocation>
        <location evidence="1">Host nucleus</location>
    </subcellularLocation>
</comment>
<comment type="subcellular location">
    <molecule>Isoform P5</molecule>
    <subcellularLocation>
        <location evidence="1">Host nucleus</location>
    </subcellularLocation>
</comment>
<comment type="alternative products">
    <event type="alternative initiation"/>
    <isoform>
        <id>Q66T64-1</id>
        <name>P</name>
        <sequence type="displayed"/>
    </isoform>
    <isoform>
        <id>Q66T64-2</id>
        <name>P2</name>
        <sequence type="described" ref="VSP_026900"/>
    </isoform>
    <isoform>
        <id>Q66T64-3</id>
        <name>P3</name>
        <sequence type="described" ref="VSP_026899"/>
    </isoform>
    <isoform>
        <id>Q66T64-4</id>
        <name>P5</name>
        <sequence type="described" ref="VSP_026898"/>
    </isoform>
</comment>
<comment type="PTM">
    <text evidence="1">Phosphorylated by host PKC and by an unknown kinase.</text>
</comment>
<comment type="similarity">
    <text evidence="4">Belongs to the lyssavirus protein P family.</text>
</comment>
<accession>Q66T64</accession>
<name>PHOSP_RABVB</name>
<sequence length="297" mass="33096">MSKIFVNPSAIRAGLADLEMAEETVDLIARNIEDNQAHLQGEPIEVDSLPEDMRRLQLDDTKPSGPGEIAATGESKCQEDFQMDEAEDPALLFQSYLDNVGIQIVRQMKSGERFLKIWSQTVEEIISYVTVNFPSLPGKSTEDKATQTASRELKKETVSAPSQRDSQSSKTKVAAQTASGPPALEWSTANEEDDPSVEAEIAHQIAESFSKKYKFPSRSSGIFLYNFEQLKMNLDDIVKESKNVPSVTRLAHDGSKLPLRCVLGWVALAKSKKFQLLVEPDKLNKIMQDDLNRYAFP</sequence>
<keyword id="KW-0024">Alternative initiation</keyword>
<keyword id="KW-0143">Chaperone</keyword>
<keyword id="KW-1176">Cytoplasmic inwards viral transport</keyword>
<keyword id="KW-1035">Host cytoplasm</keyword>
<keyword id="KW-1048">Host nucleus</keyword>
<keyword id="KW-0945">Host-virus interaction</keyword>
<keyword id="KW-1090">Inhibition of host innate immune response by virus</keyword>
<keyword id="KW-1114">Inhibition of host interferon signaling pathway by virus</keyword>
<keyword id="KW-1105">Inhibition of host STAT1 by virus</keyword>
<keyword id="KW-1106">Inhibition of host STAT2 by virus</keyword>
<keyword id="KW-1223">Inhibition of host TBK1 by virus</keyword>
<keyword id="KW-1225">Inhibition of host TLR pathway by virus</keyword>
<keyword id="KW-0922">Interferon antiviral system evasion</keyword>
<keyword id="KW-1177">Microtubular inwards viral transport</keyword>
<keyword id="KW-0597">Phosphoprotein</keyword>
<keyword id="KW-0899">Viral immunoevasion</keyword>
<keyword id="KW-0693">Viral RNA replication</keyword>
<keyword id="KW-0946">Virion</keyword>
<keyword id="KW-1160">Virus entry into host cell</keyword>
<dbReference type="EMBL" id="AY705373">
    <property type="protein sequence ID" value="AAU11516.1"/>
    <property type="molecule type" value="Genomic_RNA"/>
</dbReference>
<dbReference type="SMR" id="Q66T64"/>
<dbReference type="Proteomes" id="UP000006845">
    <property type="component" value="Genome"/>
</dbReference>
<dbReference type="GO" id="GO:0043657">
    <property type="term" value="C:host cell"/>
    <property type="evidence" value="ECO:0007669"/>
    <property type="project" value="GOC"/>
</dbReference>
<dbReference type="GO" id="GO:0030430">
    <property type="term" value="C:host cell cytoplasm"/>
    <property type="evidence" value="ECO:0007669"/>
    <property type="project" value="UniProtKB-SubCell"/>
</dbReference>
<dbReference type="GO" id="GO:0042025">
    <property type="term" value="C:host cell nucleus"/>
    <property type="evidence" value="ECO:0007669"/>
    <property type="project" value="UniProtKB-SubCell"/>
</dbReference>
<dbReference type="GO" id="GO:0044423">
    <property type="term" value="C:virion component"/>
    <property type="evidence" value="ECO:0007669"/>
    <property type="project" value="UniProtKB-KW"/>
</dbReference>
<dbReference type="GO" id="GO:0003968">
    <property type="term" value="F:RNA-directed RNA polymerase activity"/>
    <property type="evidence" value="ECO:0007669"/>
    <property type="project" value="InterPro"/>
</dbReference>
<dbReference type="GO" id="GO:0075521">
    <property type="term" value="P:microtubule-dependent intracellular transport of viral material towards nucleus"/>
    <property type="evidence" value="ECO:0007669"/>
    <property type="project" value="UniProtKB-KW"/>
</dbReference>
<dbReference type="GO" id="GO:0046718">
    <property type="term" value="P:symbiont entry into host cell"/>
    <property type="evidence" value="ECO:0007669"/>
    <property type="project" value="UniProtKB-KW"/>
</dbReference>
<dbReference type="GO" id="GO:0039723">
    <property type="term" value="P:symbiont-mediated suppression of host cytoplasmic pattern recognition receptor signaling pathway via inhibition of TBK1 activity"/>
    <property type="evidence" value="ECO:0007669"/>
    <property type="project" value="UniProtKB-KW"/>
</dbReference>
<dbReference type="GO" id="GO:0039563">
    <property type="term" value="P:symbiont-mediated suppression of host JAK-STAT cascade via inhibition of STAT1 activity"/>
    <property type="evidence" value="ECO:0007669"/>
    <property type="project" value="UniProtKB-KW"/>
</dbReference>
<dbReference type="GO" id="GO:0039564">
    <property type="term" value="P:symbiont-mediated suppression of host JAK-STAT cascade via inhibition of STAT2 activity"/>
    <property type="evidence" value="ECO:0007669"/>
    <property type="project" value="UniProtKB-KW"/>
</dbReference>
<dbReference type="GO" id="GO:0039722">
    <property type="term" value="P:symbiont-mediated suppression of host toll-like receptor signaling pathway"/>
    <property type="evidence" value="ECO:0007669"/>
    <property type="project" value="UniProtKB-KW"/>
</dbReference>
<dbReference type="GO" id="GO:0039502">
    <property type="term" value="P:symbiont-mediated suppression of host type I interferon-mediated signaling pathway"/>
    <property type="evidence" value="ECO:0007669"/>
    <property type="project" value="UniProtKB-KW"/>
</dbReference>
<dbReference type="GO" id="GO:0019083">
    <property type="term" value="P:viral transcription"/>
    <property type="evidence" value="ECO:0007669"/>
    <property type="project" value="InterPro"/>
</dbReference>
<dbReference type="CDD" id="cd21032">
    <property type="entry name" value="RABV_P-protein-C_like"/>
    <property type="match status" value="1"/>
</dbReference>
<dbReference type="Gene3D" id="6.10.140.1560">
    <property type="match status" value="1"/>
</dbReference>
<dbReference type="Gene3D" id="1.20.120.820">
    <property type="entry name" value="Phosphoprotein, C-terminal domain"/>
    <property type="match status" value="1"/>
</dbReference>
<dbReference type="InterPro" id="IPR004259">
    <property type="entry name" value="PP_M1-like"/>
</dbReference>
<dbReference type="InterPro" id="IPR037199">
    <property type="entry name" value="PP_M1_C"/>
</dbReference>
<dbReference type="InterPro" id="IPR049506">
    <property type="entry name" value="RABV_P-like_C"/>
</dbReference>
<dbReference type="Pfam" id="PF03012">
    <property type="entry name" value="PP_M1"/>
    <property type="match status" value="1"/>
</dbReference>
<dbReference type="SUPFAM" id="SSF118173">
    <property type="entry name" value="Phosphoprotein M1, C-terminal domain"/>
    <property type="match status" value="1"/>
</dbReference>
<protein>
    <recommendedName>
        <fullName>Phosphoprotein</fullName>
        <shortName>Protein P</shortName>
    </recommendedName>
    <alternativeName>
        <fullName>Protein M1</fullName>
    </alternativeName>
</protein>
<organismHost>
    <name type="scientific">Homo sapiens</name>
    <name type="common">Human</name>
    <dbReference type="NCBI Taxonomy" id="9606"/>
</organismHost>
<organismHost>
    <name type="scientific">Mammalia</name>
    <dbReference type="NCBI Taxonomy" id="40674"/>
</organismHost>
<feature type="chain" id="PRO_0000295250" description="Phosphoprotein">
    <location>
        <begin position="1"/>
        <end position="297"/>
    </location>
</feature>
<feature type="region of interest" description="Disordered" evidence="3">
    <location>
        <begin position="137"/>
        <end position="198"/>
    </location>
</feature>
<feature type="region of interest" description="DYNLL1 and DYNLL2 binding" evidence="1">
    <location>
        <begin position="138"/>
        <end position="172"/>
    </location>
</feature>
<feature type="short sequence motif" description="Nuclear export signal" evidence="1">
    <location>
        <begin position="49"/>
        <end position="58"/>
    </location>
</feature>
<feature type="short sequence motif" description="Nuclear localization signal" evidence="1">
    <location>
        <begin position="211"/>
        <end position="214"/>
    </location>
</feature>
<feature type="compositionally biased region" description="Basic and acidic residues" evidence="3">
    <location>
        <begin position="140"/>
        <end position="157"/>
    </location>
</feature>
<feature type="compositionally biased region" description="Polar residues" evidence="3">
    <location>
        <begin position="159"/>
        <end position="179"/>
    </location>
</feature>
<feature type="modified residue" description="Phosphoserine; by host" evidence="1">
    <location>
        <position position="64"/>
    </location>
</feature>
<feature type="modified residue" description="Phosphoserine; by host PKC" evidence="1">
    <location>
        <position position="162"/>
    </location>
</feature>
<feature type="modified residue" description="Phosphoserine; by host PKC" evidence="1">
    <location>
        <position position="210"/>
    </location>
</feature>
<feature type="modified residue" description="Phosphoserine; by host PKC" evidence="1">
    <location>
        <position position="271"/>
    </location>
</feature>
<feature type="splice variant" id="VSP_026898" description="In isoform P5." evidence="4">
    <location>
        <begin position="1"/>
        <end position="82"/>
    </location>
</feature>
<feature type="splice variant" id="VSP_026899" description="In isoform P3." evidence="4">
    <location>
        <begin position="1"/>
        <end position="52"/>
    </location>
</feature>
<feature type="splice variant" id="VSP_026900" description="In isoform P2." evidence="4">
    <location>
        <begin position="1"/>
        <end position="19"/>
    </location>
</feature>
<organism>
    <name type="scientific">Rabies virus (strain silver-haired bat-associated)</name>
    <name type="common">RABV</name>
    <name type="synonym">SHBRV</name>
    <dbReference type="NCBI Taxonomy" id="445793"/>
    <lineage>
        <taxon>Viruses</taxon>
        <taxon>Riboviria</taxon>
        <taxon>Orthornavirae</taxon>
        <taxon>Negarnaviricota</taxon>
        <taxon>Haploviricotina</taxon>
        <taxon>Monjiviricetes</taxon>
        <taxon>Mononegavirales</taxon>
        <taxon>Rhabdoviridae</taxon>
        <taxon>Alpharhabdovirinae</taxon>
        <taxon>Lyssavirus</taxon>
        <taxon>Lyssavirus rabies</taxon>
    </lineage>
</organism>